<organism>
    <name type="scientific">Rabies virus (strain CVS-11)</name>
    <name type="common">RABV</name>
    <dbReference type="NCBI Taxonomy" id="11294"/>
    <lineage>
        <taxon>Viruses</taxon>
        <taxon>Riboviria</taxon>
        <taxon>Orthornavirae</taxon>
        <taxon>Negarnaviricota</taxon>
        <taxon>Haploviricotina</taxon>
        <taxon>Monjiviricetes</taxon>
        <taxon>Mononegavirales</taxon>
        <taxon>Rhabdoviridae</taxon>
        <taxon>Alpharhabdovirinae</taxon>
        <taxon>Lyssavirus</taxon>
        <taxon>Lyssavirus rabies</taxon>
    </lineage>
</organism>
<protein>
    <recommendedName>
        <fullName>Nucleoprotein</fullName>
        <shortName>NP</shortName>
    </recommendedName>
    <alternativeName>
        <fullName>Nucleocapsid protein</fullName>
        <shortName>Protein N</shortName>
    </alternativeName>
</protein>
<feature type="chain" id="PRO_0000295207" description="Nucleoprotein">
    <location>
        <begin position="1"/>
        <end position="450"/>
    </location>
</feature>
<feature type="modified residue" description="Phosphoserine; by host CK2" evidence="1">
    <location>
        <position position="389"/>
    </location>
</feature>
<feature type="sequence variant" description="In strain: CVS-1991 and CVS-2006.">
    <original>D</original>
    <variation>E</variation>
    <location>
        <position position="117"/>
    </location>
</feature>
<feature type="sequence variant" description="In strain: CVS-2006.">
    <original>N</original>
    <variation>S</variation>
    <location>
        <position position="157"/>
    </location>
</feature>
<feature type="sequence variant" description="In strain: CVS-1991 and CVS-2006.">
    <original>T</original>
    <variation>S</variation>
    <location>
        <position position="377"/>
    </location>
</feature>
<feature type="sequence variant" description="In strain: CVS-2006.">
    <original>N</original>
    <variation>S</variation>
    <location>
        <position position="448"/>
    </location>
</feature>
<feature type="strand" evidence="3">
    <location>
        <begin position="34"/>
        <end position="36"/>
    </location>
</feature>
<feature type="strand" evidence="3">
    <location>
        <begin position="40"/>
        <end position="43"/>
    </location>
</feature>
<feature type="helix" evidence="3">
    <location>
        <begin position="49"/>
        <end position="62"/>
    </location>
</feature>
<feature type="helix" evidence="3">
    <location>
        <begin position="67"/>
        <end position="76"/>
    </location>
</feature>
<feature type="helix" evidence="3">
    <location>
        <begin position="77"/>
        <end position="80"/>
    </location>
</feature>
<feature type="strand" evidence="3">
    <location>
        <begin position="89"/>
        <end position="91"/>
    </location>
</feature>
<feature type="strand" evidence="3">
    <location>
        <begin position="94"/>
        <end position="97"/>
    </location>
</feature>
<feature type="helix" evidence="3">
    <location>
        <begin position="105"/>
        <end position="108"/>
    </location>
</feature>
<feature type="strand" evidence="3">
    <location>
        <begin position="109"/>
        <end position="113"/>
    </location>
</feature>
<feature type="helix" evidence="3">
    <location>
        <begin position="134"/>
        <end position="152"/>
    </location>
</feature>
<feature type="helix" evidence="3">
    <location>
        <begin position="161"/>
        <end position="172"/>
    </location>
</feature>
<feature type="helix" evidence="3">
    <location>
        <begin position="186"/>
        <end position="193"/>
    </location>
</feature>
<feature type="turn" evidence="3">
    <location>
        <begin position="194"/>
        <end position="196"/>
    </location>
</feature>
<feature type="helix" evidence="3">
    <location>
        <begin position="197"/>
        <end position="199"/>
    </location>
</feature>
<feature type="helix" evidence="3">
    <location>
        <begin position="201"/>
        <end position="216"/>
    </location>
</feature>
<feature type="helix" evidence="3">
    <location>
        <begin position="222"/>
        <end position="224"/>
    </location>
</feature>
<feature type="helix" evidence="3">
    <location>
        <begin position="225"/>
        <end position="228"/>
    </location>
</feature>
<feature type="helix" evidence="3">
    <location>
        <begin position="229"/>
        <end position="231"/>
    </location>
</feature>
<feature type="turn" evidence="3">
    <location>
        <begin position="232"/>
        <end position="235"/>
    </location>
</feature>
<feature type="helix" evidence="3">
    <location>
        <begin position="237"/>
        <end position="248"/>
    </location>
</feature>
<feature type="helix" evidence="3">
    <location>
        <begin position="253"/>
        <end position="258"/>
    </location>
</feature>
<feature type="helix" evidence="3">
    <location>
        <begin position="265"/>
        <end position="272"/>
    </location>
</feature>
<feature type="helix" evidence="3">
    <location>
        <begin position="285"/>
        <end position="288"/>
    </location>
</feature>
<feature type="turn" evidence="3">
    <location>
        <begin position="289"/>
        <end position="293"/>
    </location>
</feature>
<feature type="turn" evidence="3">
    <location>
        <begin position="302"/>
        <end position="305"/>
    </location>
</feature>
<feature type="helix" evidence="3">
    <location>
        <begin position="306"/>
        <end position="318"/>
    </location>
</feature>
<feature type="helix" evidence="3">
    <location>
        <begin position="322"/>
        <end position="325"/>
    </location>
</feature>
<feature type="helix" evidence="3">
    <location>
        <begin position="335"/>
        <end position="347"/>
    </location>
</feature>
<feature type="helix" evidence="3">
    <location>
        <begin position="402"/>
        <end position="411"/>
    </location>
</feature>
<feature type="turn" evidence="3">
    <location>
        <begin position="412"/>
        <end position="414"/>
    </location>
</feature>
<feature type="helix" evidence="3">
    <location>
        <begin position="418"/>
        <end position="428"/>
    </location>
</feature>
<feature type="helix" evidence="3">
    <location>
        <begin position="438"/>
        <end position="446"/>
    </location>
</feature>
<organismHost>
    <name type="scientific">Homo sapiens</name>
    <name type="common">Human</name>
    <dbReference type="NCBI Taxonomy" id="9606"/>
</organismHost>
<organismHost>
    <name type="scientific">Mammalia</name>
    <dbReference type="NCBI Taxonomy" id="40674"/>
</organismHost>
<keyword id="KW-0002">3D-structure</keyword>
<keyword id="KW-0167">Capsid protein</keyword>
<keyword id="KW-1139">Helical capsid protein</keyword>
<keyword id="KW-1035">Host cytoplasm</keyword>
<keyword id="KW-0597">Phosphoprotein</keyword>
<keyword id="KW-0687">Ribonucleoprotein</keyword>
<keyword id="KW-0694">RNA-binding</keyword>
<keyword id="KW-0766">Superantigen</keyword>
<keyword id="KW-0543">Viral nucleoprotein</keyword>
<keyword id="KW-0946">Virion</keyword>
<proteinExistence type="evidence at protein level"/>
<name>NCAP_RABVC</name>
<reference key="1">
    <citation type="journal article" date="1991" name="Virus Genes">
        <title>Conserved nucleotide sequence of rabies virus cDNA encoding the nucleoprotein.</title>
        <authorList>
            <person name="Mannen K."/>
            <person name="Hiramatsu K."/>
            <person name="Mifune K."/>
            <person name="Sakamoto S."/>
        </authorList>
    </citation>
    <scope>NUCLEOTIDE SEQUENCE [MRNA]</scope>
    <source>
        <strain>CVS-1991</strain>
    </source>
</reference>
<reference key="2">
    <citation type="submission" date="2001-08" db="EMBL/GenBank/DDBJ databases">
        <title>Rabies virus CVS-11 nucleoprotein gene.</title>
        <authorList>
            <person name="Inoue S."/>
        </authorList>
    </citation>
    <scope>NUCLEOTIDE SEQUENCE [GENOMIC RNA]</scope>
</reference>
<reference key="3">
    <citation type="submission" date="2006-06" db="EMBL/GenBank/DDBJ databases">
        <title>Rabies virus CVS 3'-end of the genomic RNA including nucleoprotein and phosphoprotein genes, cDNA of genomic RNA.</title>
        <authorList>
            <person name="Gupta P.K."/>
            <person name="Raut A.A."/>
            <person name="Goel A."/>
            <person name="Rathor J.S."/>
            <person name="Chaturvedi V.K."/>
            <person name="Pandey K.D."/>
            <person name="Rai A."/>
        </authorList>
    </citation>
    <scope>NUCLEOTIDE SEQUENCE [GENOMIC RNA]</scope>
    <source>
        <strain>CVS-2006</strain>
    </source>
</reference>
<sequence length="450" mass="50734">MDADKIVFKVNNQVVSLKPEIIVDQYEYKYPAIKDLKKPCITLGKAPDLNKAYKSVLSGMNAAKLDPDDVCSYLAAAMQFFEGTCPEDWTSYGILIARKGDRITPNSLVEIKRTDVDGNWALTGGMELTRDPTVSEHASLVGLLLSLYRLSKISGQNTGNYKTNIADRIEQIFETAPFVKIVEHHTLMTTHKMCANWSTIPNFRFLAGTYDMFFSRIEHLYSAIRVGTVVTAYEDCSGLVSFTGFIKQINLTAREAILYFFHKNFEEEIRRMFEPGQETAVPHSYFIHFRSLGLSGKSPYSSNAVGHVFNLIHFVGCYMGQVRSLNATVIAACAPHEMSVLGGYLGEEFFGKGTFERRFFRDEKELQEYEAAELTKTDVALADDGTVNSDDEDYFSGETRSPEAVYTRIMMNGGRLKRSHIRRYVSVSSNHQARPNSFAEFLNKTYSNDS</sequence>
<comment type="function">
    <text evidence="1">Encapsidates the genome in a ratio of one protein N per nine ribonucleotides, protecting it from nucleases. If expressed without protein P it binds non-specifically RNA and therefore can bind it's own mRNA. Interaction with protein P abolishes any non-specific RNA binding, and prevents phosphorylation. The soluble N-P complex encapsidates specifically the genomic RNA, with protein N protecting the genome like a pearl necklace. The encapsidated genomic RNA is termed the nucleocapsid (NC) and serves as template for viral transcription and replication. Protein N binds protein P in the NC through a different interaction, and can be phosphorylated. Subsequent viral replication is dependent on intracellular concentration of newly synthesized protein N. During replication, encapsidation by protein N is coupled to RNA synthesis and all replicative products are resistant to nucleases (By similarity).</text>
</comment>
<comment type="subunit">
    <text evidence="1">Homomultimerizes to form the nucleocapsid. Binds to viral genomic RNA. In nucleocapsid, binds protein P and thereby positions the polymerase on the template. Protein P acts as a chaperone on free protein N to prevent it from aggregation before encapsidating genomic RNA (By similarity).</text>
</comment>
<comment type="subcellular location">
    <subcellularLocation>
        <location>Virion</location>
    </subcellularLocation>
    <subcellularLocation>
        <location evidence="1">Host cytoplasm</location>
    </subcellularLocation>
</comment>
<comment type="PTM">
    <text evidence="1">Phosphorylated by host CK2. Unphosphorylated protein N seems to have a better affinity for leader viral promoter encapsidation. Phosphorylation of protein N in ribonucleocapsid may stabilize the interaction with protein P, thereby playing an important role in viral transcription/replication (By similarity).</text>
</comment>
<comment type="miscellaneous">
    <text evidence="1">Displays a superantigen activity in human and mouse, activating mostly V-beta-8 subtypes of T-cell receptor.</text>
</comment>
<comment type="similarity">
    <text evidence="2">Belongs to the lyssavirus nucleocapsid protein family.</text>
</comment>
<evidence type="ECO:0000250" key="1"/>
<evidence type="ECO:0000305" key="2"/>
<evidence type="ECO:0007829" key="3">
    <source>
        <dbReference type="PDB" id="8B8V"/>
    </source>
</evidence>
<dbReference type="EMBL" id="D42112">
    <property type="protein sequence ID" value="BAA07689.1"/>
    <property type="molecule type" value="mRNA"/>
</dbReference>
<dbReference type="EMBL" id="AB069973">
    <property type="protein sequence ID" value="BAC07527.1"/>
    <property type="molecule type" value="Genomic_RNA"/>
</dbReference>
<dbReference type="EMBL" id="DQ286762">
    <property type="protein sequence ID" value="ABB89493.2"/>
    <property type="molecule type" value="Genomic_RNA"/>
</dbReference>
<dbReference type="PIR" id="A58460">
    <property type="entry name" value="A58460"/>
</dbReference>
<dbReference type="PDB" id="8B8V">
    <property type="method" value="X-ray"/>
    <property type="resolution" value="2.30 A"/>
    <property type="chains" value="A=24-450"/>
</dbReference>
<dbReference type="PDBsum" id="8B8V"/>
<dbReference type="SMR" id="Q8JXF6"/>
<dbReference type="CD-CODE" id="886620B0">
    <property type="entry name" value="Negri body"/>
</dbReference>
<dbReference type="GO" id="GO:0019029">
    <property type="term" value="C:helical viral capsid"/>
    <property type="evidence" value="ECO:0007669"/>
    <property type="project" value="UniProtKB-KW"/>
</dbReference>
<dbReference type="GO" id="GO:0030430">
    <property type="term" value="C:host cell cytoplasm"/>
    <property type="evidence" value="ECO:0007669"/>
    <property type="project" value="UniProtKB-SubCell"/>
</dbReference>
<dbReference type="GO" id="GO:1990904">
    <property type="term" value="C:ribonucleoprotein complex"/>
    <property type="evidence" value="ECO:0007669"/>
    <property type="project" value="UniProtKB-KW"/>
</dbReference>
<dbReference type="GO" id="GO:0019013">
    <property type="term" value="C:viral nucleocapsid"/>
    <property type="evidence" value="ECO:0007669"/>
    <property type="project" value="UniProtKB-KW"/>
</dbReference>
<dbReference type="GO" id="GO:0003723">
    <property type="term" value="F:RNA binding"/>
    <property type="evidence" value="ECO:0007669"/>
    <property type="project" value="UniProtKB-KW"/>
</dbReference>
<dbReference type="Gene3D" id="1.10.3610.10">
    <property type="entry name" value="Nucleoprotein"/>
    <property type="match status" value="1"/>
</dbReference>
<dbReference type="Gene3D" id="1.10.3570.10">
    <property type="entry name" value="Rhabdovirus nucleocapsid protein like domain"/>
    <property type="match status" value="1"/>
</dbReference>
<dbReference type="InterPro" id="IPR000448">
    <property type="entry name" value="Rhabdo_ncapsid"/>
</dbReference>
<dbReference type="InterPro" id="IPR023331">
    <property type="entry name" value="Rhabdovirus_ncapsid_C"/>
</dbReference>
<dbReference type="InterPro" id="IPR023330">
    <property type="entry name" value="Rhabdovirus_ncapsid_N"/>
</dbReference>
<dbReference type="InterPro" id="IPR035961">
    <property type="entry name" value="Rhabdovirus_nucleoprotein-like"/>
</dbReference>
<dbReference type="Pfam" id="PF00945">
    <property type="entry name" value="Rhabdo_ncap"/>
    <property type="match status" value="1"/>
</dbReference>
<dbReference type="SUPFAM" id="SSF140809">
    <property type="entry name" value="Rhabdovirus nucleoprotein-like"/>
    <property type="match status" value="1"/>
</dbReference>
<accession>Q8JXF6</accession>
<accession>Q2V876</accession>
<accession>Q6LEP7</accession>
<gene>
    <name type="primary">N</name>
</gene>